<organism>
    <name type="scientific">Cupriavidus metallidurans (strain ATCC 43123 / DSM 2839 / NBRC 102507 / CH34)</name>
    <name type="common">Ralstonia metallidurans</name>
    <dbReference type="NCBI Taxonomy" id="266264"/>
    <lineage>
        <taxon>Bacteria</taxon>
        <taxon>Pseudomonadati</taxon>
        <taxon>Pseudomonadota</taxon>
        <taxon>Betaproteobacteria</taxon>
        <taxon>Burkholderiales</taxon>
        <taxon>Burkholderiaceae</taxon>
        <taxon>Cupriavidus</taxon>
    </lineage>
</organism>
<proteinExistence type="inferred from homology"/>
<comment type="function">
    <text evidence="1">IGPS catalyzes the conversion of PRFAR and glutamine to IGP, AICAR and glutamate. The HisF subunit catalyzes the cyclization activity that produces IGP and AICAR from PRFAR using the ammonia provided by the HisH subunit.</text>
</comment>
<comment type="catalytic activity">
    <reaction evidence="1">
        <text>5-[(5-phospho-1-deoxy-D-ribulos-1-ylimino)methylamino]-1-(5-phospho-beta-D-ribosyl)imidazole-4-carboxamide + L-glutamine = D-erythro-1-(imidazol-4-yl)glycerol 3-phosphate + 5-amino-1-(5-phospho-beta-D-ribosyl)imidazole-4-carboxamide + L-glutamate + H(+)</text>
        <dbReference type="Rhea" id="RHEA:24793"/>
        <dbReference type="ChEBI" id="CHEBI:15378"/>
        <dbReference type="ChEBI" id="CHEBI:29985"/>
        <dbReference type="ChEBI" id="CHEBI:58278"/>
        <dbReference type="ChEBI" id="CHEBI:58359"/>
        <dbReference type="ChEBI" id="CHEBI:58475"/>
        <dbReference type="ChEBI" id="CHEBI:58525"/>
        <dbReference type="EC" id="4.3.2.10"/>
    </reaction>
</comment>
<comment type="pathway">
    <text evidence="1">Amino-acid biosynthesis; L-histidine biosynthesis; L-histidine from 5-phospho-alpha-D-ribose 1-diphosphate: step 5/9.</text>
</comment>
<comment type="subunit">
    <text evidence="1">Heterodimer of HisH and HisF.</text>
</comment>
<comment type="subcellular location">
    <subcellularLocation>
        <location evidence="1">Cytoplasm</location>
    </subcellularLocation>
</comment>
<comment type="similarity">
    <text evidence="1">Belongs to the HisA/HisF family.</text>
</comment>
<keyword id="KW-0028">Amino-acid biosynthesis</keyword>
<keyword id="KW-0963">Cytoplasm</keyword>
<keyword id="KW-0368">Histidine biosynthesis</keyword>
<keyword id="KW-0456">Lyase</keyword>
<keyword id="KW-1185">Reference proteome</keyword>
<reference key="1">
    <citation type="journal article" date="2010" name="PLoS ONE">
        <title>The complete genome sequence of Cupriavidus metallidurans strain CH34, a master survivalist in harsh and anthropogenic environments.</title>
        <authorList>
            <person name="Janssen P.J."/>
            <person name="Van Houdt R."/>
            <person name="Moors H."/>
            <person name="Monsieurs P."/>
            <person name="Morin N."/>
            <person name="Michaux A."/>
            <person name="Benotmane M.A."/>
            <person name="Leys N."/>
            <person name="Vallaeys T."/>
            <person name="Lapidus A."/>
            <person name="Monchy S."/>
            <person name="Medigue C."/>
            <person name="Taghavi S."/>
            <person name="McCorkle S."/>
            <person name="Dunn J."/>
            <person name="van der Lelie D."/>
            <person name="Mergeay M."/>
        </authorList>
    </citation>
    <scope>NUCLEOTIDE SEQUENCE [LARGE SCALE GENOMIC DNA]</scope>
    <source>
        <strain>ATCC 43123 / DSM 2839 / NBRC 102507 / CH34</strain>
    </source>
</reference>
<protein>
    <recommendedName>
        <fullName evidence="1">Imidazole glycerol phosphate synthase subunit HisF</fullName>
        <ecNumber evidence="1">4.3.2.10</ecNumber>
    </recommendedName>
    <alternativeName>
        <fullName evidence="1">IGP synthase cyclase subunit</fullName>
    </alternativeName>
    <alternativeName>
        <fullName evidence="1">IGP synthase subunit HisF</fullName>
    </alternativeName>
    <alternativeName>
        <fullName evidence="1">ImGP synthase subunit HisF</fullName>
        <shortName evidence="1">IGPS subunit HisF</shortName>
    </alternativeName>
</protein>
<dbReference type="EC" id="4.3.2.10" evidence="1"/>
<dbReference type="EMBL" id="CP000352">
    <property type="protein sequence ID" value="ABF10114.1"/>
    <property type="molecule type" value="Genomic_DNA"/>
</dbReference>
<dbReference type="RefSeq" id="WP_008643056.1">
    <property type="nucleotide sequence ID" value="NC_007973.1"/>
</dbReference>
<dbReference type="SMR" id="Q1LIB2"/>
<dbReference type="STRING" id="266264.Rmet_3242"/>
<dbReference type="GeneID" id="60825566"/>
<dbReference type="KEGG" id="rme:Rmet_3242"/>
<dbReference type="eggNOG" id="COG0107">
    <property type="taxonomic scope" value="Bacteria"/>
</dbReference>
<dbReference type="HOGENOM" id="CLU_048577_4_0_4"/>
<dbReference type="UniPathway" id="UPA00031">
    <property type="reaction ID" value="UER00010"/>
</dbReference>
<dbReference type="Proteomes" id="UP000002429">
    <property type="component" value="Chromosome"/>
</dbReference>
<dbReference type="GO" id="GO:0005737">
    <property type="term" value="C:cytoplasm"/>
    <property type="evidence" value="ECO:0007669"/>
    <property type="project" value="UniProtKB-SubCell"/>
</dbReference>
<dbReference type="GO" id="GO:0000107">
    <property type="term" value="F:imidazoleglycerol-phosphate synthase activity"/>
    <property type="evidence" value="ECO:0007669"/>
    <property type="project" value="UniProtKB-UniRule"/>
</dbReference>
<dbReference type="GO" id="GO:0016829">
    <property type="term" value="F:lyase activity"/>
    <property type="evidence" value="ECO:0007669"/>
    <property type="project" value="UniProtKB-KW"/>
</dbReference>
<dbReference type="GO" id="GO:0000105">
    <property type="term" value="P:L-histidine biosynthetic process"/>
    <property type="evidence" value="ECO:0007669"/>
    <property type="project" value="UniProtKB-UniRule"/>
</dbReference>
<dbReference type="CDD" id="cd04731">
    <property type="entry name" value="HisF"/>
    <property type="match status" value="1"/>
</dbReference>
<dbReference type="FunFam" id="3.20.20.70:FF:000006">
    <property type="entry name" value="Imidazole glycerol phosphate synthase subunit HisF"/>
    <property type="match status" value="1"/>
</dbReference>
<dbReference type="Gene3D" id="3.20.20.70">
    <property type="entry name" value="Aldolase class I"/>
    <property type="match status" value="1"/>
</dbReference>
<dbReference type="HAMAP" id="MF_01013">
    <property type="entry name" value="HisF"/>
    <property type="match status" value="1"/>
</dbReference>
<dbReference type="InterPro" id="IPR013785">
    <property type="entry name" value="Aldolase_TIM"/>
</dbReference>
<dbReference type="InterPro" id="IPR006062">
    <property type="entry name" value="His_biosynth"/>
</dbReference>
<dbReference type="InterPro" id="IPR004651">
    <property type="entry name" value="HisF"/>
</dbReference>
<dbReference type="InterPro" id="IPR050064">
    <property type="entry name" value="IGPS_HisA/HisF"/>
</dbReference>
<dbReference type="InterPro" id="IPR011060">
    <property type="entry name" value="RibuloseP-bd_barrel"/>
</dbReference>
<dbReference type="NCBIfam" id="TIGR00735">
    <property type="entry name" value="hisF"/>
    <property type="match status" value="1"/>
</dbReference>
<dbReference type="PANTHER" id="PTHR21235:SF2">
    <property type="entry name" value="IMIDAZOLE GLYCEROL PHOSPHATE SYNTHASE HISHF"/>
    <property type="match status" value="1"/>
</dbReference>
<dbReference type="PANTHER" id="PTHR21235">
    <property type="entry name" value="IMIDAZOLE GLYCEROL PHOSPHATE SYNTHASE SUBUNIT HISF/H IGP SYNTHASE SUBUNIT HISF/H"/>
    <property type="match status" value="1"/>
</dbReference>
<dbReference type="Pfam" id="PF00977">
    <property type="entry name" value="His_biosynth"/>
    <property type="match status" value="1"/>
</dbReference>
<dbReference type="SUPFAM" id="SSF51366">
    <property type="entry name" value="Ribulose-phoshate binding barrel"/>
    <property type="match status" value="1"/>
</dbReference>
<name>HIS6_CUPMC</name>
<gene>
    <name evidence="1" type="primary">hisF</name>
    <name type="ordered locus">Rmet_3242</name>
</gene>
<accession>Q1LIB2</accession>
<feature type="chain" id="PRO_1000063126" description="Imidazole glycerol phosphate synthase subunit HisF">
    <location>
        <begin position="1"/>
        <end position="256"/>
    </location>
</feature>
<feature type="active site" evidence="1">
    <location>
        <position position="11"/>
    </location>
</feature>
<feature type="active site" evidence="1">
    <location>
        <position position="130"/>
    </location>
</feature>
<sequence>MLAKRIIPCLDVTNGRVVKGVNFVELRDAGDPVEIARRYDEQGADEITFLDITATSDGRDLILHIIEAVASQVFIPLTVGGGVRTVEDVRRLLNAGADKISVNSSAIANPQLVSDATGKYGSQCIVVAIDAKRSSAPGEPPRWEVFTHGGRKATGLDAVEWAREMARRGAGEILLTSMDRDGTKSGFDLELTRAVSDAVPVPVIASGGVGGLQDLADGIRLGHADAVLAASIFHYGEHTVGEAKAFMAREGIPVRM</sequence>
<evidence type="ECO:0000255" key="1">
    <source>
        <dbReference type="HAMAP-Rule" id="MF_01013"/>
    </source>
</evidence>